<organism>
    <name type="scientific">Methanosphaerula palustris (strain ATCC BAA-1556 / DSM 19958 / E1-9c)</name>
    <dbReference type="NCBI Taxonomy" id="521011"/>
    <lineage>
        <taxon>Archaea</taxon>
        <taxon>Methanobacteriati</taxon>
        <taxon>Methanobacteriota</taxon>
        <taxon>Stenosarchaea group</taxon>
        <taxon>Methanomicrobia</taxon>
        <taxon>Methanomicrobiales</taxon>
        <taxon>Methanoregulaceae</taxon>
        <taxon>Methanosphaerula</taxon>
    </lineage>
</organism>
<feature type="chain" id="PRO_1000123151" description="dCTP deaminase, dUMP-forming">
    <location>
        <begin position="1"/>
        <end position="186"/>
    </location>
</feature>
<feature type="active site" description="Proton donor/acceptor" evidence="1">
    <location>
        <position position="127"/>
    </location>
</feature>
<feature type="binding site" evidence="1">
    <location>
        <begin position="99"/>
        <end position="104"/>
    </location>
    <ligand>
        <name>dCTP</name>
        <dbReference type="ChEBI" id="CHEBI:61481"/>
    </ligand>
</feature>
<feature type="binding site" evidence="1">
    <location>
        <position position="117"/>
    </location>
    <ligand>
        <name>dCTP</name>
        <dbReference type="ChEBI" id="CHEBI:61481"/>
    </ligand>
</feature>
<feature type="binding site" evidence="1">
    <location>
        <begin position="125"/>
        <end position="127"/>
    </location>
    <ligand>
        <name>dCTP</name>
        <dbReference type="ChEBI" id="CHEBI:61481"/>
    </ligand>
</feature>
<feature type="binding site" evidence="1">
    <location>
        <position position="146"/>
    </location>
    <ligand>
        <name>dCTP</name>
        <dbReference type="ChEBI" id="CHEBI:61481"/>
    </ligand>
</feature>
<feature type="binding site" evidence="1">
    <location>
        <position position="159"/>
    </location>
    <ligand>
        <name>dCTP</name>
        <dbReference type="ChEBI" id="CHEBI:61481"/>
    </ligand>
</feature>
<feature type="binding site" evidence="1">
    <location>
        <position position="166"/>
    </location>
    <ligand>
        <name>dCTP</name>
        <dbReference type="ChEBI" id="CHEBI:61481"/>
    </ligand>
</feature>
<feature type="binding site" evidence="1">
    <location>
        <position position="170"/>
    </location>
    <ligand>
        <name>dCTP</name>
        <dbReference type="ChEBI" id="CHEBI:61481"/>
    </ligand>
</feature>
<feature type="site" description="Important for bifunctional activity" evidence="1">
    <location>
        <begin position="114"/>
        <end position="115"/>
    </location>
</feature>
<keyword id="KW-0378">Hydrolase</keyword>
<keyword id="KW-0546">Nucleotide metabolism</keyword>
<keyword id="KW-0547">Nucleotide-binding</keyword>
<keyword id="KW-1185">Reference proteome</keyword>
<evidence type="ECO:0000255" key="1">
    <source>
        <dbReference type="HAMAP-Rule" id="MF_00146"/>
    </source>
</evidence>
<protein>
    <recommendedName>
        <fullName evidence="1">dCTP deaminase, dUMP-forming</fullName>
        <ecNumber evidence="1">3.5.4.30</ecNumber>
    </recommendedName>
    <alternativeName>
        <fullName evidence="1">Bifunctional dCTP deaminase:dUTPase</fullName>
    </alternativeName>
    <alternativeName>
        <fullName evidence="1">DCD-DUT</fullName>
    </alternativeName>
</protein>
<reference key="1">
    <citation type="journal article" date="2015" name="Genome Announc.">
        <title>Complete Genome Sequence of Methanosphaerula palustris E1-9CT, a Hydrogenotrophic Methanogen Isolated from a Minerotrophic Fen Peatland.</title>
        <authorList>
            <person name="Cadillo-Quiroz H."/>
            <person name="Browne P."/>
            <person name="Kyrpides N."/>
            <person name="Woyke T."/>
            <person name="Goodwin L."/>
            <person name="Detter C."/>
            <person name="Yavitt J.B."/>
            <person name="Zinder S.H."/>
        </authorList>
    </citation>
    <scope>NUCLEOTIDE SEQUENCE [LARGE SCALE GENOMIC DNA]</scope>
    <source>
        <strain>ATCC BAA-1556 / DSM 19958 / E1-9c</strain>
    </source>
</reference>
<accession>B8GHN1</accession>
<name>DCDB_METPE</name>
<gene>
    <name evidence="1" type="primary">dcd</name>
    <name type="ordered locus">Mpal_1302</name>
</gene>
<sequence>MILVDWQIMDRISRGQIKVEPFEPGLIQPNSLDIRLGDHFVWYVPGDRVIDPYDKESVTAEVEEMNANEVILYPGQFMLAETKEVLSLPDNVVASIEGKSSIARLGIELHQTGGWIDAGFIGSITLEMCNVNQRPVKMYAGMPIGQLVFYTTERAEQPYNLKQDAKYQGQRQATLSRYHENQRFIQ</sequence>
<proteinExistence type="inferred from homology"/>
<comment type="function">
    <text evidence="1">Bifunctional enzyme that catalyzes both the deamination of dCTP to dUTP and the hydrolysis of dUTP to dUMP without releasing the toxic dUTP intermediate.</text>
</comment>
<comment type="catalytic activity">
    <reaction evidence="1">
        <text>dCTP + 2 H2O = dUMP + NH4(+) + diphosphate</text>
        <dbReference type="Rhea" id="RHEA:19205"/>
        <dbReference type="ChEBI" id="CHEBI:15377"/>
        <dbReference type="ChEBI" id="CHEBI:28938"/>
        <dbReference type="ChEBI" id="CHEBI:33019"/>
        <dbReference type="ChEBI" id="CHEBI:61481"/>
        <dbReference type="ChEBI" id="CHEBI:246422"/>
        <dbReference type="EC" id="3.5.4.30"/>
    </reaction>
</comment>
<comment type="pathway">
    <text evidence="1">Pyrimidine metabolism; dUMP biosynthesis; dUMP from dCTP: step 1/1.</text>
</comment>
<comment type="subunit">
    <text evidence="1">Homotrimer.</text>
</comment>
<comment type="similarity">
    <text evidence="1">Belongs to the dCTP deaminase family.</text>
</comment>
<dbReference type="EC" id="3.5.4.30" evidence="1"/>
<dbReference type="EMBL" id="CP001338">
    <property type="protein sequence ID" value="ACL16636.1"/>
    <property type="molecule type" value="Genomic_DNA"/>
</dbReference>
<dbReference type="RefSeq" id="WP_012617955.1">
    <property type="nucleotide sequence ID" value="NC_011832.1"/>
</dbReference>
<dbReference type="SMR" id="B8GHN1"/>
<dbReference type="STRING" id="521011.Mpal_1302"/>
<dbReference type="GeneID" id="7271162"/>
<dbReference type="KEGG" id="mpl:Mpal_1302"/>
<dbReference type="eggNOG" id="arCOG04048">
    <property type="taxonomic scope" value="Archaea"/>
</dbReference>
<dbReference type="HOGENOM" id="CLU_087476_2_1_2"/>
<dbReference type="OrthoDB" id="33242at2157"/>
<dbReference type="UniPathway" id="UPA00610">
    <property type="reaction ID" value="UER00667"/>
</dbReference>
<dbReference type="Proteomes" id="UP000002457">
    <property type="component" value="Chromosome"/>
</dbReference>
<dbReference type="GO" id="GO:0033973">
    <property type="term" value="F:dCTP deaminase (dUMP-forming) activity"/>
    <property type="evidence" value="ECO:0007669"/>
    <property type="project" value="UniProtKB-UniRule"/>
</dbReference>
<dbReference type="GO" id="GO:0008829">
    <property type="term" value="F:dCTP deaminase activity"/>
    <property type="evidence" value="ECO:0007669"/>
    <property type="project" value="InterPro"/>
</dbReference>
<dbReference type="GO" id="GO:0000166">
    <property type="term" value="F:nucleotide binding"/>
    <property type="evidence" value="ECO:0007669"/>
    <property type="project" value="UniProtKB-KW"/>
</dbReference>
<dbReference type="GO" id="GO:0006226">
    <property type="term" value="P:dUMP biosynthetic process"/>
    <property type="evidence" value="ECO:0007669"/>
    <property type="project" value="UniProtKB-UniRule"/>
</dbReference>
<dbReference type="GO" id="GO:0006229">
    <property type="term" value="P:dUTP biosynthetic process"/>
    <property type="evidence" value="ECO:0007669"/>
    <property type="project" value="InterPro"/>
</dbReference>
<dbReference type="CDD" id="cd07557">
    <property type="entry name" value="trimeric_dUTPase"/>
    <property type="match status" value="1"/>
</dbReference>
<dbReference type="Gene3D" id="2.70.40.10">
    <property type="match status" value="1"/>
</dbReference>
<dbReference type="HAMAP" id="MF_00146">
    <property type="entry name" value="dCTP_deaminase"/>
    <property type="match status" value="1"/>
</dbReference>
<dbReference type="InterPro" id="IPR011962">
    <property type="entry name" value="dCTP_deaminase"/>
</dbReference>
<dbReference type="InterPro" id="IPR036157">
    <property type="entry name" value="dUTPase-like_sf"/>
</dbReference>
<dbReference type="InterPro" id="IPR033704">
    <property type="entry name" value="dUTPase_trimeric"/>
</dbReference>
<dbReference type="NCBIfam" id="TIGR02274">
    <property type="entry name" value="dCTP_deam"/>
    <property type="match status" value="1"/>
</dbReference>
<dbReference type="PANTHER" id="PTHR42680">
    <property type="entry name" value="DCTP DEAMINASE"/>
    <property type="match status" value="1"/>
</dbReference>
<dbReference type="PANTHER" id="PTHR42680:SF3">
    <property type="entry name" value="DCTP DEAMINASE"/>
    <property type="match status" value="1"/>
</dbReference>
<dbReference type="Pfam" id="PF22769">
    <property type="entry name" value="DCD"/>
    <property type="match status" value="1"/>
</dbReference>
<dbReference type="SUPFAM" id="SSF51283">
    <property type="entry name" value="dUTPase-like"/>
    <property type="match status" value="1"/>
</dbReference>